<protein>
    <recommendedName>
        <fullName>Heat shock 70 kDa protein 4</fullName>
        <shortName>HSP70-4</shortName>
    </recommendedName>
</protein>
<evidence type="ECO:0000256" key="1">
    <source>
        <dbReference type="SAM" id="MobiDB-lite"/>
    </source>
</evidence>
<evidence type="ECO:0000305" key="2"/>
<keyword id="KW-0067">ATP-binding</keyword>
<keyword id="KW-0547">Nucleotide-binding</keyword>
<keyword id="KW-0346">Stress response</keyword>
<feature type="chain" id="PRO_0000078321" description="Heat shock 70 kDa protein 4">
    <location>
        <begin position="1"/>
        <end position="661"/>
    </location>
</feature>
<feature type="region of interest" description="Disordered" evidence="1">
    <location>
        <begin position="637"/>
        <end position="661"/>
    </location>
</feature>
<feature type="compositionally biased region" description="Gly residues" evidence="1">
    <location>
        <begin position="637"/>
        <end position="648"/>
    </location>
</feature>
<organism>
    <name type="scientific">Trypanosoma brucei brucei</name>
    <dbReference type="NCBI Taxonomy" id="5702"/>
    <lineage>
        <taxon>Eukaryota</taxon>
        <taxon>Discoba</taxon>
        <taxon>Euglenozoa</taxon>
        <taxon>Kinetoplastea</taxon>
        <taxon>Metakinetoplastina</taxon>
        <taxon>Trypanosomatida</taxon>
        <taxon>Trypanosomatidae</taxon>
        <taxon>Trypanosoma</taxon>
    </lineage>
</organism>
<proteinExistence type="evidence at transcript level"/>
<sequence>MTYEGAIGIDLGTTYSCVGVWQNERVEIIANDQGNRTTPSYVAFTDSERLIGDAAKNQVAMNPTNTVFDAKRLIGRKFSDSVVQSDMKHWPFKVVTKGDDKPVIQVQFRGETKTFNPEEISSMVLLKMKEVAESYLGKQVAKAVVTVPAYFNDSQRQATKDAGTIAGLEVLRIINEPTAAAIAYGLDKADEGKERNVLIFDLGGGTFDVTLLTIDGGIFEVKATNGDTHLGGEDFDNRLVAHFTEEFKRKNKGKDLSSNLRALRRLRTACERAKRTLSSAAQATIEIDALFENIDFQATITRARFEELCGDLFRGTLQPVERVLQDAKMDKRAVHDVVLVGGSTRIPKVMQLVSDFFGGKELNKSINPDEAVXYGAAVQAFILTGGKSKQTEGLLLLDVAPLTLGIETAGGVMTALIKRNTTIPTKKSQIFSTYSDNQPGVHIQVFEGERTMTKDCHLLGTFDLSGIPPAPRGVPQIEVTFDLDANGILSVSAEEKGTGKRNQIVITNDKGRLSKADIERMVSDAAKYEAEDKAHVXXIDAKNGLENYAFSMKNTINDPNVAGKLDDADKNAVTTAVEEALRWLNDNQEASLEEYNHRQKELEGVCAPILSKMYQGMGGGDGPGGMPEGMPGGMPGGMPGGMGGGMGGAAASSGPKVEEVD</sequence>
<name>HSP74_TRYBB</name>
<dbReference type="EMBL" id="M14697">
    <property type="protein sequence ID" value="AAA30204.1"/>
    <property type="molecule type" value="mRNA"/>
</dbReference>
<dbReference type="PIR" id="A25398">
    <property type="entry name" value="A25398"/>
</dbReference>
<dbReference type="GO" id="GO:0020015">
    <property type="term" value="C:glycosome"/>
    <property type="evidence" value="ECO:0000314"/>
    <property type="project" value="GeneDB"/>
</dbReference>
<dbReference type="GO" id="GO:0005524">
    <property type="term" value="F:ATP binding"/>
    <property type="evidence" value="ECO:0007669"/>
    <property type="project" value="UniProtKB-KW"/>
</dbReference>
<dbReference type="GO" id="GO:0016887">
    <property type="term" value="F:ATP hydrolysis activity"/>
    <property type="evidence" value="ECO:0000314"/>
    <property type="project" value="GeneDB"/>
</dbReference>
<dbReference type="GO" id="GO:0140662">
    <property type="term" value="F:ATP-dependent protein folding chaperone"/>
    <property type="evidence" value="ECO:0007669"/>
    <property type="project" value="InterPro"/>
</dbReference>
<dbReference type="GO" id="GO:0009408">
    <property type="term" value="P:response to heat"/>
    <property type="evidence" value="ECO:0000270"/>
    <property type="project" value="GeneDB"/>
</dbReference>
<dbReference type="CDD" id="cd10233">
    <property type="entry name" value="ASKHA_NBD_HSP70_HSPA1"/>
    <property type="match status" value="1"/>
</dbReference>
<dbReference type="FunFam" id="2.60.34.10:FF:000002">
    <property type="entry name" value="Heat shock 70 kDa"/>
    <property type="match status" value="1"/>
</dbReference>
<dbReference type="FunFam" id="3.90.640.10:FF:000002">
    <property type="entry name" value="Heat shock 70 kDa"/>
    <property type="match status" value="1"/>
</dbReference>
<dbReference type="FunFam" id="1.20.1270.10:FF:000055">
    <property type="entry name" value="Heat shock 70 kDa protein"/>
    <property type="match status" value="1"/>
</dbReference>
<dbReference type="FunFam" id="3.30.420.40:FF:000172">
    <property type="entry name" value="Heat shock 70 kDa protein"/>
    <property type="match status" value="1"/>
</dbReference>
<dbReference type="FunFam" id="3.30.30.30:FF:000001">
    <property type="entry name" value="heat shock 70 kDa protein-like"/>
    <property type="match status" value="1"/>
</dbReference>
<dbReference type="FunFam" id="3.30.420.40:FF:000026">
    <property type="entry name" value="Heat shock protein 70"/>
    <property type="match status" value="1"/>
</dbReference>
<dbReference type="Gene3D" id="1.20.1270.10">
    <property type="match status" value="1"/>
</dbReference>
<dbReference type="Gene3D" id="3.30.30.30">
    <property type="match status" value="1"/>
</dbReference>
<dbReference type="Gene3D" id="3.30.420.40">
    <property type="match status" value="2"/>
</dbReference>
<dbReference type="Gene3D" id="3.90.640.10">
    <property type="entry name" value="Actin, Chain A, domain 4"/>
    <property type="match status" value="1"/>
</dbReference>
<dbReference type="Gene3D" id="2.60.34.10">
    <property type="entry name" value="Substrate Binding Domain Of DNAk, Chain A, domain 1"/>
    <property type="match status" value="1"/>
</dbReference>
<dbReference type="InterPro" id="IPR043129">
    <property type="entry name" value="ATPase_NBD"/>
</dbReference>
<dbReference type="InterPro" id="IPR018181">
    <property type="entry name" value="Heat_shock_70_CS"/>
</dbReference>
<dbReference type="InterPro" id="IPR029048">
    <property type="entry name" value="HSP70_C_sf"/>
</dbReference>
<dbReference type="InterPro" id="IPR029047">
    <property type="entry name" value="HSP70_peptide-bd_sf"/>
</dbReference>
<dbReference type="InterPro" id="IPR013126">
    <property type="entry name" value="Hsp_70_fam"/>
</dbReference>
<dbReference type="NCBIfam" id="NF001413">
    <property type="entry name" value="PRK00290.1"/>
    <property type="match status" value="1"/>
</dbReference>
<dbReference type="PANTHER" id="PTHR19375">
    <property type="entry name" value="HEAT SHOCK PROTEIN 70KDA"/>
    <property type="match status" value="1"/>
</dbReference>
<dbReference type="Pfam" id="PF00012">
    <property type="entry name" value="HSP70"/>
    <property type="match status" value="1"/>
</dbReference>
<dbReference type="PRINTS" id="PR00301">
    <property type="entry name" value="HEATSHOCK70"/>
</dbReference>
<dbReference type="SUPFAM" id="SSF53067">
    <property type="entry name" value="Actin-like ATPase domain"/>
    <property type="match status" value="2"/>
</dbReference>
<dbReference type="SUPFAM" id="SSF100934">
    <property type="entry name" value="Heat shock protein 70kD (HSP70), C-terminal subdomain"/>
    <property type="match status" value="1"/>
</dbReference>
<dbReference type="SUPFAM" id="SSF100920">
    <property type="entry name" value="Heat shock protein 70kD (HSP70), peptide-binding domain"/>
    <property type="match status" value="1"/>
</dbReference>
<dbReference type="PROSITE" id="PS00297">
    <property type="entry name" value="HSP70_1"/>
    <property type="match status" value="1"/>
</dbReference>
<dbReference type="PROSITE" id="PS00329">
    <property type="entry name" value="HSP70_2"/>
    <property type="match status" value="1"/>
</dbReference>
<dbReference type="PROSITE" id="PS01036">
    <property type="entry name" value="HSP70_3"/>
    <property type="match status" value="1"/>
</dbReference>
<accession>P11145</accession>
<reference key="1">
    <citation type="journal article" date="1986" name="Mol. Cell. Biol.">
        <title>Conserved sequences and transcription of the hsp70 gene family in Trypanosoma brucei.</title>
        <authorList>
            <person name="Glass D.J."/>
            <person name="Polvere R.I."/>
            <person name="van der Ploeg L.H.T."/>
        </authorList>
    </citation>
    <scope>NUCLEOTIDE SEQUENCE [MRNA]</scope>
</reference>
<comment type="similarity">
    <text evidence="2">Belongs to the heat shock protein 70 family.</text>
</comment>